<dbReference type="EMBL" id="AC012562">
    <property type="protein sequence ID" value="AAG51359.1"/>
    <property type="molecule type" value="Genomic_DNA"/>
</dbReference>
<dbReference type="EMBL" id="CP002686">
    <property type="protein sequence ID" value="AEE74662.1"/>
    <property type="molecule type" value="Genomic_DNA"/>
</dbReference>
<dbReference type="EMBL" id="CP002686">
    <property type="protein sequence ID" value="AEE74663.1"/>
    <property type="molecule type" value="Genomic_DNA"/>
</dbReference>
<dbReference type="EMBL" id="AY057485">
    <property type="protein sequence ID" value="AAL09719.1"/>
    <property type="status" value="ALT_FRAME"/>
    <property type="molecule type" value="mRNA"/>
</dbReference>
<dbReference type="EMBL" id="BT000497">
    <property type="protein sequence ID" value="AAN18066.1"/>
    <property type="molecule type" value="mRNA"/>
</dbReference>
<dbReference type="RefSeq" id="NP_187480.1">
    <property type="nucleotide sequence ID" value="NM_111702.2"/>
</dbReference>
<dbReference type="RefSeq" id="NP_974257.1">
    <property type="nucleotide sequence ID" value="NM_202528.3"/>
</dbReference>
<dbReference type="SMR" id="Q9C9Y8"/>
<dbReference type="BioGRID" id="5350">
    <property type="interactions" value="43"/>
</dbReference>
<dbReference type="FunCoup" id="Q9C9Y8">
    <property type="interactions" value="204"/>
</dbReference>
<dbReference type="IntAct" id="Q9C9Y8">
    <property type="interactions" value="44"/>
</dbReference>
<dbReference type="STRING" id="3702.Q9C9Y8"/>
<dbReference type="iPTMnet" id="Q9C9Y8"/>
<dbReference type="SwissPalm" id="Q9C9Y8"/>
<dbReference type="PaxDb" id="3702-AT3G08680.2"/>
<dbReference type="ProteomicsDB" id="242868"/>
<dbReference type="EnsemblPlants" id="AT3G08680.1">
    <property type="protein sequence ID" value="AT3G08680.1"/>
    <property type="gene ID" value="AT3G08680"/>
</dbReference>
<dbReference type="EnsemblPlants" id="AT3G08680.2">
    <property type="protein sequence ID" value="AT3G08680.2"/>
    <property type="gene ID" value="AT3G08680"/>
</dbReference>
<dbReference type="GeneID" id="820015"/>
<dbReference type="Gramene" id="AT3G08680.1">
    <property type="protein sequence ID" value="AT3G08680.1"/>
    <property type="gene ID" value="AT3G08680"/>
</dbReference>
<dbReference type="Gramene" id="AT3G08680.2">
    <property type="protein sequence ID" value="AT3G08680.2"/>
    <property type="gene ID" value="AT3G08680"/>
</dbReference>
<dbReference type="KEGG" id="ath:AT3G08680"/>
<dbReference type="Araport" id="AT3G08680"/>
<dbReference type="TAIR" id="AT3G08680"/>
<dbReference type="eggNOG" id="ENOG502QT13">
    <property type="taxonomic scope" value="Eukaryota"/>
</dbReference>
<dbReference type="HOGENOM" id="CLU_000288_92_6_1"/>
<dbReference type="InParanoid" id="Q9C9Y8"/>
<dbReference type="OMA" id="ITLCCAK"/>
<dbReference type="PhylomeDB" id="Q9C9Y8"/>
<dbReference type="PRO" id="PR:Q9C9Y8"/>
<dbReference type="Proteomes" id="UP000006548">
    <property type="component" value="Chromosome 3"/>
</dbReference>
<dbReference type="ExpressionAtlas" id="Q9C9Y8">
    <property type="expression patterns" value="baseline and differential"/>
</dbReference>
<dbReference type="GO" id="GO:0005829">
    <property type="term" value="C:cytosol"/>
    <property type="evidence" value="ECO:0007005"/>
    <property type="project" value="TAIR"/>
</dbReference>
<dbReference type="GO" id="GO:0009505">
    <property type="term" value="C:plant-type cell wall"/>
    <property type="evidence" value="ECO:0007005"/>
    <property type="project" value="TAIR"/>
</dbReference>
<dbReference type="GO" id="GO:0005886">
    <property type="term" value="C:plasma membrane"/>
    <property type="evidence" value="ECO:0007005"/>
    <property type="project" value="TAIR"/>
</dbReference>
<dbReference type="GO" id="GO:0009506">
    <property type="term" value="C:plasmodesma"/>
    <property type="evidence" value="ECO:0007005"/>
    <property type="project" value="TAIR"/>
</dbReference>
<dbReference type="GO" id="GO:0005524">
    <property type="term" value="F:ATP binding"/>
    <property type="evidence" value="ECO:0007669"/>
    <property type="project" value="UniProtKB-KW"/>
</dbReference>
<dbReference type="GO" id="GO:0004672">
    <property type="term" value="F:protein kinase activity"/>
    <property type="evidence" value="ECO:0007669"/>
    <property type="project" value="InterPro"/>
</dbReference>
<dbReference type="FunFam" id="3.30.200.20:FF:000307">
    <property type="entry name" value="pollen receptor-like kinase 1"/>
    <property type="match status" value="1"/>
</dbReference>
<dbReference type="FunFam" id="3.80.10.10:FF:000234">
    <property type="entry name" value="Probable inactive receptor kinase RLK902"/>
    <property type="match status" value="1"/>
</dbReference>
<dbReference type="FunFam" id="1.10.510.10:FF:000095">
    <property type="entry name" value="protein STRUBBELIG-RECEPTOR FAMILY 8"/>
    <property type="match status" value="1"/>
</dbReference>
<dbReference type="Gene3D" id="3.30.200.20">
    <property type="entry name" value="Phosphorylase Kinase, domain 1"/>
    <property type="match status" value="1"/>
</dbReference>
<dbReference type="Gene3D" id="3.80.10.10">
    <property type="entry name" value="Ribonuclease Inhibitor"/>
    <property type="match status" value="2"/>
</dbReference>
<dbReference type="Gene3D" id="1.10.510.10">
    <property type="entry name" value="Transferase(Phosphotransferase) domain 1"/>
    <property type="match status" value="1"/>
</dbReference>
<dbReference type="InterPro" id="IPR050994">
    <property type="entry name" value="At_inactive_RLKs"/>
</dbReference>
<dbReference type="InterPro" id="IPR011009">
    <property type="entry name" value="Kinase-like_dom_sf"/>
</dbReference>
<dbReference type="InterPro" id="IPR001611">
    <property type="entry name" value="Leu-rich_rpt"/>
</dbReference>
<dbReference type="InterPro" id="IPR032675">
    <property type="entry name" value="LRR_dom_sf"/>
</dbReference>
<dbReference type="InterPro" id="IPR013210">
    <property type="entry name" value="LRR_N_plant-typ"/>
</dbReference>
<dbReference type="InterPro" id="IPR000719">
    <property type="entry name" value="Prot_kinase_dom"/>
</dbReference>
<dbReference type="InterPro" id="IPR017441">
    <property type="entry name" value="Protein_kinase_ATP_BS"/>
</dbReference>
<dbReference type="InterPro" id="IPR001245">
    <property type="entry name" value="Ser-Thr/Tyr_kinase_cat_dom"/>
</dbReference>
<dbReference type="PANTHER" id="PTHR48010">
    <property type="entry name" value="OS05G0588300 PROTEIN"/>
    <property type="match status" value="1"/>
</dbReference>
<dbReference type="PANTHER" id="PTHR48010:SF64">
    <property type="entry name" value="PROTEIN KINASE DOMAIN-CONTAINING PROTEIN"/>
    <property type="match status" value="1"/>
</dbReference>
<dbReference type="Pfam" id="PF00560">
    <property type="entry name" value="LRR_1"/>
    <property type="match status" value="3"/>
</dbReference>
<dbReference type="Pfam" id="PF08263">
    <property type="entry name" value="LRRNT_2"/>
    <property type="match status" value="1"/>
</dbReference>
<dbReference type="Pfam" id="PF07714">
    <property type="entry name" value="PK_Tyr_Ser-Thr"/>
    <property type="match status" value="1"/>
</dbReference>
<dbReference type="SUPFAM" id="SSF52058">
    <property type="entry name" value="L domain-like"/>
    <property type="match status" value="1"/>
</dbReference>
<dbReference type="SUPFAM" id="SSF56112">
    <property type="entry name" value="Protein kinase-like (PK-like)"/>
    <property type="match status" value="1"/>
</dbReference>
<dbReference type="PROSITE" id="PS00107">
    <property type="entry name" value="PROTEIN_KINASE_ATP"/>
    <property type="match status" value="1"/>
</dbReference>
<dbReference type="PROSITE" id="PS50011">
    <property type="entry name" value="PROTEIN_KINASE_DOM"/>
    <property type="match status" value="1"/>
</dbReference>
<proteinExistence type="evidence at protein level"/>
<evidence type="ECO:0000250" key="1">
    <source>
        <dbReference type="UniProtKB" id="Q94AG2"/>
    </source>
</evidence>
<evidence type="ECO:0000250" key="2">
    <source>
        <dbReference type="UniProtKB" id="Q94F62"/>
    </source>
</evidence>
<evidence type="ECO:0000255" key="3"/>
<evidence type="ECO:0000255" key="4">
    <source>
        <dbReference type="PROSITE-ProRule" id="PRU00159"/>
    </source>
</evidence>
<evidence type="ECO:0000256" key="5">
    <source>
        <dbReference type="SAM" id="MobiDB-lite"/>
    </source>
</evidence>
<evidence type="ECO:0000269" key="6">
    <source>
    </source>
</evidence>
<evidence type="ECO:0000305" key="7"/>
<evidence type="ECO:0007744" key="8">
    <source>
    </source>
</evidence>
<protein>
    <recommendedName>
        <fullName>Probable inactive receptor kinase At3g08680</fullName>
    </recommendedName>
</protein>
<organism>
    <name type="scientific">Arabidopsis thaliana</name>
    <name type="common">Mouse-ear cress</name>
    <dbReference type="NCBI Taxonomy" id="3702"/>
    <lineage>
        <taxon>Eukaryota</taxon>
        <taxon>Viridiplantae</taxon>
        <taxon>Streptophyta</taxon>
        <taxon>Embryophyta</taxon>
        <taxon>Tracheophyta</taxon>
        <taxon>Spermatophyta</taxon>
        <taxon>Magnoliopsida</taxon>
        <taxon>eudicotyledons</taxon>
        <taxon>Gunneridae</taxon>
        <taxon>Pentapetalae</taxon>
        <taxon>rosids</taxon>
        <taxon>malvids</taxon>
        <taxon>Brassicales</taxon>
        <taxon>Brassicaceae</taxon>
        <taxon>Camelineae</taxon>
        <taxon>Arabidopsis</taxon>
    </lineage>
</organism>
<reference key="1">
    <citation type="journal article" date="2000" name="Nature">
        <title>Sequence and analysis of chromosome 3 of the plant Arabidopsis thaliana.</title>
        <authorList>
            <person name="Salanoubat M."/>
            <person name="Lemcke K."/>
            <person name="Rieger M."/>
            <person name="Ansorge W."/>
            <person name="Unseld M."/>
            <person name="Fartmann B."/>
            <person name="Valle G."/>
            <person name="Bloecker H."/>
            <person name="Perez-Alonso M."/>
            <person name="Obermaier B."/>
            <person name="Delseny M."/>
            <person name="Boutry M."/>
            <person name="Grivell L.A."/>
            <person name="Mache R."/>
            <person name="Puigdomenech P."/>
            <person name="De Simone V."/>
            <person name="Choisne N."/>
            <person name="Artiguenave F."/>
            <person name="Robert C."/>
            <person name="Brottier P."/>
            <person name="Wincker P."/>
            <person name="Cattolico L."/>
            <person name="Weissenbach J."/>
            <person name="Saurin W."/>
            <person name="Quetier F."/>
            <person name="Schaefer M."/>
            <person name="Mueller-Auer S."/>
            <person name="Gabel C."/>
            <person name="Fuchs M."/>
            <person name="Benes V."/>
            <person name="Wurmbach E."/>
            <person name="Drzonek H."/>
            <person name="Erfle H."/>
            <person name="Jordan N."/>
            <person name="Bangert S."/>
            <person name="Wiedelmann R."/>
            <person name="Kranz H."/>
            <person name="Voss H."/>
            <person name="Holland R."/>
            <person name="Brandt P."/>
            <person name="Nyakatura G."/>
            <person name="Vezzi A."/>
            <person name="D'Angelo M."/>
            <person name="Pallavicini A."/>
            <person name="Toppo S."/>
            <person name="Simionati B."/>
            <person name="Conrad A."/>
            <person name="Hornischer K."/>
            <person name="Kauer G."/>
            <person name="Loehnert T.-H."/>
            <person name="Nordsiek G."/>
            <person name="Reichelt J."/>
            <person name="Scharfe M."/>
            <person name="Schoen O."/>
            <person name="Bargues M."/>
            <person name="Terol J."/>
            <person name="Climent J."/>
            <person name="Navarro P."/>
            <person name="Collado C."/>
            <person name="Perez-Perez A."/>
            <person name="Ottenwaelder B."/>
            <person name="Duchemin D."/>
            <person name="Cooke R."/>
            <person name="Laudie M."/>
            <person name="Berger-Llauro C."/>
            <person name="Purnelle B."/>
            <person name="Masuy D."/>
            <person name="de Haan M."/>
            <person name="Maarse A.C."/>
            <person name="Alcaraz J.-P."/>
            <person name="Cottet A."/>
            <person name="Casacuberta E."/>
            <person name="Monfort A."/>
            <person name="Argiriou A."/>
            <person name="Flores M."/>
            <person name="Liguori R."/>
            <person name="Vitale D."/>
            <person name="Mannhaupt G."/>
            <person name="Haase D."/>
            <person name="Schoof H."/>
            <person name="Rudd S."/>
            <person name="Zaccaria P."/>
            <person name="Mewes H.-W."/>
            <person name="Mayer K.F.X."/>
            <person name="Kaul S."/>
            <person name="Town C.D."/>
            <person name="Koo H.L."/>
            <person name="Tallon L.J."/>
            <person name="Jenkins J."/>
            <person name="Rooney T."/>
            <person name="Rizzo M."/>
            <person name="Walts A."/>
            <person name="Utterback T."/>
            <person name="Fujii C.Y."/>
            <person name="Shea T.P."/>
            <person name="Creasy T.H."/>
            <person name="Haas B."/>
            <person name="Maiti R."/>
            <person name="Wu D."/>
            <person name="Peterson J."/>
            <person name="Van Aken S."/>
            <person name="Pai G."/>
            <person name="Militscher J."/>
            <person name="Sellers P."/>
            <person name="Gill J.E."/>
            <person name="Feldblyum T.V."/>
            <person name="Preuss D."/>
            <person name="Lin X."/>
            <person name="Nierman W.C."/>
            <person name="Salzberg S.L."/>
            <person name="White O."/>
            <person name="Venter J.C."/>
            <person name="Fraser C.M."/>
            <person name="Kaneko T."/>
            <person name="Nakamura Y."/>
            <person name="Sato S."/>
            <person name="Kato T."/>
            <person name="Asamizu E."/>
            <person name="Sasamoto S."/>
            <person name="Kimura T."/>
            <person name="Idesawa K."/>
            <person name="Kawashima K."/>
            <person name="Kishida Y."/>
            <person name="Kiyokawa C."/>
            <person name="Kohara M."/>
            <person name="Matsumoto M."/>
            <person name="Matsuno A."/>
            <person name="Muraki A."/>
            <person name="Nakayama S."/>
            <person name="Nakazaki N."/>
            <person name="Shinpo S."/>
            <person name="Takeuchi C."/>
            <person name="Wada T."/>
            <person name="Watanabe A."/>
            <person name="Yamada M."/>
            <person name="Yasuda M."/>
            <person name="Tabata S."/>
        </authorList>
    </citation>
    <scope>NUCLEOTIDE SEQUENCE [LARGE SCALE GENOMIC DNA]</scope>
    <source>
        <strain>cv. Columbia</strain>
    </source>
</reference>
<reference key="2">
    <citation type="journal article" date="2017" name="Plant J.">
        <title>Araport11: a complete reannotation of the Arabidopsis thaliana reference genome.</title>
        <authorList>
            <person name="Cheng C.Y."/>
            <person name="Krishnakumar V."/>
            <person name="Chan A.P."/>
            <person name="Thibaud-Nissen F."/>
            <person name="Schobel S."/>
            <person name="Town C.D."/>
        </authorList>
    </citation>
    <scope>GENOME REANNOTATION</scope>
    <source>
        <strain>cv. Columbia</strain>
    </source>
</reference>
<reference key="3">
    <citation type="journal article" date="2003" name="Science">
        <title>Empirical analysis of transcriptional activity in the Arabidopsis genome.</title>
        <authorList>
            <person name="Yamada K."/>
            <person name="Lim J."/>
            <person name="Dale J.M."/>
            <person name="Chen H."/>
            <person name="Shinn P."/>
            <person name="Palm C.J."/>
            <person name="Southwick A.M."/>
            <person name="Wu H.C."/>
            <person name="Kim C.J."/>
            <person name="Nguyen M."/>
            <person name="Pham P.K."/>
            <person name="Cheuk R.F."/>
            <person name="Karlin-Newmann G."/>
            <person name="Liu S.X."/>
            <person name="Lam B."/>
            <person name="Sakano H."/>
            <person name="Wu T."/>
            <person name="Yu G."/>
            <person name="Miranda M."/>
            <person name="Quach H.L."/>
            <person name="Tripp M."/>
            <person name="Chang C.H."/>
            <person name="Lee J.M."/>
            <person name="Toriumi M.J."/>
            <person name="Chan M.M."/>
            <person name="Tang C.C."/>
            <person name="Onodera C.S."/>
            <person name="Deng J.M."/>
            <person name="Akiyama K."/>
            <person name="Ansari Y."/>
            <person name="Arakawa T."/>
            <person name="Banh J."/>
            <person name="Banno F."/>
            <person name="Bowser L."/>
            <person name="Brooks S.Y."/>
            <person name="Carninci P."/>
            <person name="Chao Q."/>
            <person name="Choy N."/>
            <person name="Enju A."/>
            <person name="Goldsmith A.D."/>
            <person name="Gurjal M."/>
            <person name="Hansen N.F."/>
            <person name="Hayashizaki Y."/>
            <person name="Johnson-Hopson C."/>
            <person name="Hsuan V.W."/>
            <person name="Iida K."/>
            <person name="Karnes M."/>
            <person name="Khan S."/>
            <person name="Koesema E."/>
            <person name="Ishida J."/>
            <person name="Jiang P.X."/>
            <person name="Jones T."/>
            <person name="Kawai J."/>
            <person name="Kamiya A."/>
            <person name="Meyers C."/>
            <person name="Nakajima M."/>
            <person name="Narusaka M."/>
            <person name="Seki M."/>
            <person name="Sakurai T."/>
            <person name="Satou M."/>
            <person name="Tamse R."/>
            <person name="Vaysberg M."/>
            <person name="Wallender E.K."/>
            <person name="Wong C."/>
            <person name="Yamamura Y."/>
            <person name="Yuan S."/>
            <person name="Shinozaki K."/>
            <person name="Davis R.W."/>
            <person name="Theologis A."/>
            <person name="Ecker J.R."/>
        </authorList>
    </citation>
    <scope>NUCLEOTIDE SEQUENCE [LARGE SCALE MRNA]</scope>
    <source>
        <strain>cv. Columbia</strain>
    </source>
</reference>
<reference key="4">
    <citation type="journal article" date="2004" name="Plant Cell">
        <title>Phosphoproteomics of the Arabidopsis plasma membrane and a new phosphorylation site database.</title>
        <authorList>
            <person name="Nuehse T.S."/>
            <person name="Stensballe A."/>
            <person name="Jensen O.N."/>
            <person name="Peck S.C."/>
        </authorList>
    </citation>
    <scope>PHOSPHORYLATION [LARGE SCALE ANALYSIS] AT THR-564</scope>
    <scope>IDENTIFICATION BY MASS SPECTROMETRY [LARGE SCALE ANALYSIS]</scope>
</reference>
<reference key="5">
    <citation type="journal article" date="2007" name="Plant J.">
        <title>A leucine-rich repeat protein is required for growth promotion and enhanced seed production mediated by the endophytic fungus Piriformospora indica in Arabidopsis thaliana.</title>
        <authorList>
            <person name="Shahollari B."/>
            <person name="Vadassery J."/>
            <person name="Varma A."/>
            <person name="Oelmueller R."/>
        </authorList>
    </citation>
    <scope>SUBCELLULAR LOCATION</scope>
</reference>
<reference key="6">
    <citation type="journal article" date="2009" name="Plant Physiol.">
        <title>Large-scale Arabidopsis phosphoproteome profiling reveals novel chloroplast kinase substrates and phosphorylation networks.</title>
        <authorList>
            <person name="Reiland S."/>
            <person name="Messerli G."/>
            <person name="Baerenfaller K."/>
            <person name="Gerrits B."/>
            <person name="Endler A."/>
            <person name="Grossmann J."/>
            <person name="Gruissem W."/>
            <person name="Baginsky S."/>
        </authorList>
    </citation>
    <scope>IDENTIFICATION BY MASS SPECTROMETRY [LARGE SCALE ANALYSIS]</scope>
</reference>
<gene>
    <name type="ordered locus">At3g08680</name>
    <name type="ORF">F17O14.15</name>
</gene>
<feature type="signal peptide" evidence="3">
    <location>
        <begin position="1"/>
        <end position="22"/>
    </location>
</feature>
<feature type="chain" id="PRO_0000317074" description="Probable inactive receptor kinase At3g08680">
    <location>
        <begin position="23"/>
        <end position="640"/>
    </location>
</feature>
<feature type="transmembrane region" description="Helical" evidence="3">
    <location>
        <begin position="260"/>
        <end position="280"/>
    </location>
</feature>
<feature type="repeat" description="LRR 1">
    <location>
        <begin position="93"/>
        <end position="115"/>
    </location>
</feature>
<feature type="repeat" description="LRR 2">
    <location>
        <begin position="117"/>
        <end position="138"/>
    </location>
</feature>
<feature type="repeat" description="LRR 3">
    <location>
        <begin position="139"/>
        <end position="162"/>
    </location>
</feature>
<feature type="repeat" description="LRR 4">
    <location>
        <begin position="163"/>
        <end position="185"/>
    </location>
</feature>
<feature type="repeat" description="LRR 5">
    <location>
        <begin position="186"/>
        <end position="206"/>
    </location>
</feature>
<feature type="domain" description="Protein kinase" evidence="4">
    <location>
        <begin position="341"/>
        <end position="614"/>
    </location>
</feature>
<feature type="region of interest" description="Disordered" evidence="5">
    <location>
        <begin position="222"/>
        <end position="249"/>
    </location>
</feature>
<feature type="region of interest" description="Disordered" evidence="5">
    <location>
        <begin position="289"/>
        <end position="315"/>
    </location>
</feature>
<feature type="region of interest" description="Disordered" evidence="5">
    <location>
        <begin position="612"/>
        <end position="640"/>
    </location>
</feature>
<feature type="compositionally biased region" description="Low complexity" evidence="5">
    <location>
        <begin position="226"/>
        <end position="247"/>
    </location>
</feature>
<feature type="binding site" evidence="4">
    <location>
        <begin position="347"/>
        <end position="355"/>
    </location>
    <ligand>
        <name>ATP</name>
        <dbReference type="ChEBI" id="CHEBI:30616"/>
    </ligand>
</feature>
<feature type="binding site" evidence="4">
    <location>
        <position position="369"/>
    </location>
    <ligand>
        <name>ATP</name>
        <dbReference type="ChEBI" id="CHEBI:30616"/>
    </ligand>
</feature>
<feature type="modified residue" description="Phosphoserine" evidence="2">
    <location>
        <position position="343"/>
    </location>
</feature>
<feature type="modified residue" description="Phosphothreonine" evidence="2">
    <location>
        <position position="364"/>
    </location>
</feature>
<feature type="modified residue" description="Phosphothreonine" evidence="1">
    <location>
        <position position="441"/>
    </location>
</feature>
<feature type="modified residue" description="Phosphothreonine" evidence="1">
    <location>
        <position position="514"/>
    </location>
</feature>
<feature type="modified residue" description="Phosphothreonine" evidence="8">
    <location>
        <position position="564"/>
    </location>
</feature>
<accession>Q9C9Y8</accession>
<accession>Q93ZK0</accession>
<sequence length="640" mass="69406">MMKIIAAFLFLLVTTFVSRCLSADIESDKQALLEFASLVPHSRKLNWNSTIPICASWTGITCSKNNARVTALRLPGSGLYGPLPEKTFEKLDALRIISLRSNHLQGNIPSVILSLPFIRSLYFHENNFSGTIPPVLSHRLVNLDLSANSLSGNIPTSLQNLTQLTDLSLQNNSLSGPIPNLPPRLKYLNLSFNNLNGSVPSSVKSFPASSFQGNSLLCGAPLTPCPENTTAPSPSPTTPTEGPGTTNIGRGTAKKVLSTGAIVGIAVGGSVLLFIILAIITLCCAKKRDGGQDSTAVPKAKPGRSDNKAEEFGSGVQEAEKNKLVFFEGSSYNFDLEDLLRASAEVLGKGSYGTTYKAILEEGTTVVVKRLKEVAAGKREFEQQMEAVGRISPHVNVAPLRAYYFSKDEKLLVYDYYQGGNFSMLLHGNNEGGRAALDWETRLRICLEAARGISHIHSASGAKLLHGNIKSPNVLLTQELHVCVSDFGIAPLMSHHTLIPSRSLGYRAPEAIETRKHTQKSDVYSFGVLLLEMLTGKAAGKTTGHEEVVDLPKWVQSVVREEWTGEVFDVELIKQQHNVEEEMVQMLQIAMACVSKHPDSRPSMEEVVNMMEEIRPSGSGPGSGNRASSPEMIRSSDSPV</sequence>
<name>Y3868_ARATH</name>
<keyword id="KW-0067">ATP-binding</keyword>
<keyword id="KW-0433">Leucine-rich repeat</keyword>
<keyword id="KW-0472">Membrane</keyword>
<keyword id="KW-0547">Nucleotide-binding</keyword>
<keyword id="KW-0597">Phosphoprotein</keyword>
<keyword id="KW-1185">Reference proteome</keyword>
<keyword id="KW-0677">Repeat</keyword>
<keyword id="KW-0732">Signal</keyword>
<keyword id="KW-0812">Transmembrane</keyword>
<keyword id="KW-1133">Transmembrane helix</keyword>
<comment type="interaction">
    <interactant intactId="EBI-16955024">
        <id>Q9C9Y8</id>
    </interactant>
    <interactant intactId="EBI-20655952">
        <id>C0LGG6-2</id>
        <label>At1g51890</label>
    </interactant>
    <organismsDiffer>false</organismsDiffer>
    <experiments>2</experiments>
</comment>
<comment type="interaction">
    <interactant intactId="EBI-16955024">
        <id>Q9C9Y8</id>
    </interactant>
    <interactant intactId="EBI-16955231">
        <id>Q9M0D8</id>
        <label>LRR-RLK</label>
    </interactant>
    <organismsDiffer>false</organismsDiffer>
    <experiments>3</experiments>
</comment>
<comment type="interaction">
    <interactant intactId="EBI-16955024">
        <id>Q9C9Y8</id>
    </interactant>
    <interactant intactId="EBI-20663701">
        <id>C0LGP2</id>
        <label>MEE39</label>
    </interactant>
    <organismsDiffer>false</organismsDiffer>
    <experiments>2</experiments>
</comment>
<comment type="subcellular location">
    <subcellularLocation>
        <location evidence="6">Membrane</location>
        <topology evidence="6">Single-pass membrane protein</topology>
    </subcellularLocation>
</comment>
<comment type="domain">
    <text>The protein kinase domain is predicted to be catalytically inactive.</text>
</comment>
<comment type="similarity">
    <text evidence="4">Belongs to the protein kinase superfamily. Tyr protein kinase family.</text>
</comment>
<comment type="sequence caution" evidence="7">
    <conflict type="frameshift">
        <sequence resource="EMBL-CDS" id="AAL09719"/>
    </conflict>
</comment>